<organismHost>
    <name type="scientific">Homo sapiens</name>
    <name type="common">Human</name>
    <dbReference type="NCBI Taxonomy" id="9606"/>
</organismHost>
<feature type="chain" id="PRO_0000244862" description="Protein Tat">
    <location>
        <begin position="1"/>
        <end position="138"/>
    </location>
</feature>
<feature type="region of interest" description="Disordered" evidence="3">
    <location>
        <begin position="1"/>
        <end position="33"/>
    </location>
</feature>
<feature type="region of interest" description="Cysteine-rich" evidence="1">
    <location>
        <begin position="50"/>
        <end position="66"/>
    </location>
</feature>
<feature type="region of interest" description="Core" evidence="1">
    <location>
        <begin position="67"/>
        <end position="77"/>
    </location>
</feature>
<feature type="region of interest" description="Disordered" evidence="3">
    <location>
        <begin position="79"/>
        <end position="138"/>
    </location>
</feature>
<feature type="short sequence motif" description="Nuclear localization signal, and RNA-binding (TAR)" evidence="1">
    <location>
        <begin position="78"/>
        <end position="88"/>
    </location>
</feature>
<feature type="compositionally biased region" description="Low complexity" evidence="3">
    <location>
        <begin position="10"/>
        <end position="23"/>
    </location>
</feature>
<feature type="compositionally biased region" description="Basic residues" evidence="3">
    <location>
        <begin position="79"/>
        <end position="88"/>
    </location>
</feature>
<feature type="compositionally biased region" description="Polar residues" evidence="3">
    <location>
        <begin position="95"/>
        <end position="109"/>
    </location>
</feature>
<feature type="compositionally biased region" description="Polar residues" evidence="3">
    <location>
        <begin position="128"/>
        <end position="138"/>
    </location>
</feature>
<feature type="modified residue" description="Phosphoserine; by host CDK9" evidence="1">
    <location>
        <position position="92"/>
    </location>
</feature>
<feature type="splice variant" id="VSP_022440" description="In isoform Short." evidence="4">
    <location>
        <begin position="98"/>
        <end position="138"/>
    </location>
</feature>
<reference key="1">
    <citation type="journal article" date="1995" name="AIDS Res. Hum. Retroviruses">
        <title>Nucleotide sequence of the HIV-2 EHO genome, a divergent HIV-2 isolate.</title>
        <authorList>
            <person name="Galabru J."/>
            <person name="Rey-Cuille M.A."/>
            <person name="Hovanessian A.G."/>
        </authorList>
    </citation>
    <scope>NUCLEOTIDE SEQUENCE [GENOMIC DNA]</scope>
</reference>
<reference key="2">
    <citation type="journal article" date="2005" name="Microbes Infect.">
        <title>Decoding Tat: the biology of HIV Tat posttranslational modifications.</title>
        <authorList>
            <person name="Hetzer C."/>
            <person name="Dormeyer W."/>
            <person name="Schnolzer M."/>
            <person name="Ott M."/>
        </authorList>
    </citation>
    <scope>REVIEW</scope>
    <scope>ALTERNATIVE SPLICING</scope>
</reference>
<evidence type="ECO:0000250" key="1"/>
<evidence type="ECO:0000250" key="2">
    <source>
        <dbReference type="UniProtKB" id="P04608"/>
    </source>
</evidence>
<evidence type="ECO:0000256" key="3">
    <source>
        <dbReference type="SAM" id="MobiDB-lite"/>
    </source>
</evidence>
<evidence type="ECO:0000305" key="4"/>
<keyword id="KW-0010">Activator</keyword>
<keyword id="KW-0014">AIDS</keyword>
<keyword id="KW-0025">Alternative splicing</keyword>
<keyword id="KW-1048">Host nucleus</keyword>
<keyword id="KW-0945">Host-virus interaction</keyword>
<keyword id="KW-0597">Phosphoprotein</keyword>
<keyword id="KW-0694">RNA-binding</keyword>
<keyword id="KW-0804">Transcription</keyword>
<keyword id="KW-0805">Transcription regulation</keyword>
<accession>Q89745</accession>
<comment type="function">
    <text evidence="2">Transcriptional activator that increases RNA Pol II processivity, thereby increasing the level of full-length viral transcripts. Recognizes a hairpin structure at the 5'-LTR of the nascent viral mRNAs referred to as the transactivation responsive RNA element (TAR) and recruits the cyclin T1-CDK9 complex (P-TEFb complex) that will in turn hyperphosphorylate the RNA polymerase II to allow efficient elongation. The CDK9 component of P-TEFb and other Tat-activated kinases hyperphosphorylate the C-terminus of RNA Pol II that becomes stabilized and much more processive.</text>
</comment>
<comment type="function">
    <text evidence="1">Extracellular circulating Tat can be endocytosed by surrounding uninfected cells via the binding to several surface receptors. Endosomal low pH allows Tat to cross the endosome membrane to enter the cytosol and eventually further translocate into the nucleus, thereby inducing severe cell dysfunctions ranging from cell activation to cell death. Through (By similarity).</text>
</comment>
<comment type="subunit">
    <text evidence="1">Interacts with host CCNT1. Associates with the P-TEFb complex composed at least of Tat, P-TEFb (CDK9 and CCNT1), TAR RNA, RNA Pol II. Interacts with CCNT2; the resulting complex is unable to bind to TAR RNA (By similarity).</text>
</comment>
<comment type="subcellular location">
    <subcellularLocation>
        <location evidence="1">Host nucleus</location>
        <location evidence="1">Host nucleolus</location>
    </subcellularLocation>
</comment>
<comment type="alternative products">
    <event type="alternative splicing"/>
    <isoform>
        <id>Q89745-1</id>
        <name>Long</name>
        <sequence type="displayed"/>
    </isoform>
    <isoform>
        <id>Q89745-2</id>
        <name>Short</name>
        <sequence type="described" ref="VSP_022440"/>
    </isoform>
</comment>
<comment type="domain">
    <text evidence="1">The Arg-rich RNA-binding region binds the TAR RNA. This region also mediates the nuclear localization (By similarity).</text>
</comment>
<comment type="PTM">
    <text evidence="1">The phosphorylation by CDK9 does not seem to be important for transactivation function.</text>
</comment>
<comment type="miscellaneous">
    <molecule>Isoform Short</molecule>
    <text evidence="4">Expressed in the late stage of the infection cycle, when unspliced viral RNAs are exported to the cytoplasm by the viral Rev protein.</text>
</comment>
<comment type="similarity">
    <text evidence="4">Belongs to the lentiviruses Tat family.</text>
</comment>
<comment type="sequence caution" evidence="4">
    <conflict type="erroneous gene model prediction">
        <sequence resource="EMBL-CDS" id="AAC54471"/>
    </conflict>
</comment>
<gene>
    <name type="primary">tat</name>
</gene>
<dbReference type="EMBL" id="U27200">
    <property type="protein sequence ID" value="AAC54471.1"/>
    <property type="status" value="ALT_SEQ"/>
    <property type="molecule type" value="Genomic_DNA"/>
</dbReference>
<dbReference type="Proteomes" id="UP000007423">
    <property type="component" value="Segment"/>
</dbReference>
<dbReference type="GO" id="GO:0044196">
    <property type="term" value="C:host cell nucleolus"/>
    <property type="evidence" value="ECO:0007669"/>
    <property type="project" value="UniProtKB-SubCell"/>
</dbReference>
<dbReference type="GO" id="GO:0003723">
    <property type="term" value="F:RNA binding"/>
    <property type="evidence" value="ECO:0007669"/>
    <property type="project" value="UniProtKB-KW"/>
</dbReference>
<dbReference type="GO" id="GO:0001070">
    <property type="term" value="F:RNA-binding transcription regulator activity"/>
    <property type="evidence" value="ECO:0007669"/>
    <property type="project" value="InterPro"/>
</dbReference>
<dbReference type="GO" id="GO:0050434">
    <property type="term" value="P:positive regulation of viral transcription"/>
    <property type="evidence" value="ECO:0007669"/>
    <property type="project" value="InterPro"/>
</dbReference>
<dbReference type="Gene3D" id="4.10.20.10">
    <property type="entry name" value="Tat domain"/>
    <property type="match status" value="1"/>
</dbReference>
<dbReference type="InterPro" id="IPR001831">
    <property type="entry name" value="IV_Tat"/>
</dbReference>
<dbReference type="InterPro" id="IPR036963">
    <property type="entry name" value="Tat_dom_sf"/>
</dbReference>
<dbReference type="Pfam" id="PF00539">
    <property type="entry name" value="Tat"/>
    <property type="match status" value="1"/>
</dbReference>
<dbReference type="PRINTS" id="PR00055">
    <property type="entry name" value="HIVTATDOMAIN"/>
</dbReference>
<organism>
    <name type="scientific">Human immunodeficiency virus type 2 subtype B (isolate EHO)</name>
    <name type="common">HIV-2</name>
    <dbReference type="NCBI Taxonomy" id="388821"/>
    <lineage>
        <taxon>Viruses</taxon>
        <taxon>Riboviria</taxon>
        <taxon>Pararnavirae</taxon>
        <taxon>Artverviricota</taxon>
        <taxon>Revtraviricetes</taxon>
        <taxon>Ortervirales</taxon>
        <taxon>Retroviridae</taxon>
        <taxon>Orthoretrovirinae</taxon>
        <taxon>Lentivirus</taxon>
        <taxon>Human immunodeficiency virus 2</taxon>
    </lineage>
</organism>
<proteinExistence type="inferred from homology"/>
<protein>
    <recommendedName>
        <fullName>Protein Tat</fullName>
    </recommendedName>
    <alternativeName>
        <fullName>Transactivating regulatory protein</fullName>
    </alternativeName>
</protein>
<sequence length="138" mass="15121">MEIPLKEQESSLNSSSGHSSSTSEGVANTQGLDNRGEEILSQLYRPLKACSNTCYCKKCSYHCQLCFLKKGLGICYERSRKRSSKRAKTTTSSAPNESLSARTGDSQPTKKQKKEVETTRATDLGPGRSNTSTSRFAN</sequence>
<name>TAT_HV2EH</name>